<feature type="chain" id="PRO_1000059582" description="Chaperone protein DnaK">
    <location>
        <begin position="1"/>
        <end position="639"/>
    </location>
</feature>
<feature type="region of interest" description="Disordered" evidence="2">
    <location>
        <begin position="514"/>
        <end position="554"/>
    </location>
</feature>
<feature type="region of interest" description="Disordered" evidence="2">
    <location>
        <begin position="603"/>
        <end position="639"/>
    </location>
</feature>
<feature type="compositionally biased region" description="Basic and acidic residues" evidence="2">
    <location>
        <begin position="514"/>
        <end position="529"/>
    </location>
</feature>
<feature type="compositionally biased region" description="Basic and acidic residues" evidence="2">
    <location>
        <begin position="540"/>
        <end position="553"/>
    </location>
</feature>
<feature type="compositionally biased region" description="Acidic residues" evidence="2">
    <location>
        <begin position="612"/>
        <end position="633"/>
    </location>
</feature>
<feature type="modified residue" description="Phosphothreonine; by autocatalysis" evidence="1">
    <location>
        <position position="197"/>
    </location>
</feature>
<sequence length="639" mass="68930">MAKVIGIDLGTTNSCVAIMDGSQPRVIENAEGARTTPSIVAFTDDERLAGQSAKRQAVTNPENTIFGVKRLIGRRINDEHLEKDKKNLPFEIVDGGNGDAWVKAKGETYSPSQISAFILQKMKETAESYLGEDVTQAVITVPAYFNDAQRQATKDAGKIAGLEVLRIINEPTAAALAYGLDKKETRTIAVYDLGGGTFDVTILEIDDGLFEVKSTNGDTFLGGEDFDMRIVNYLAEEFKKENSVDLTQDKMALQRLKEAAEKAKIELSSASQTEINQPFISMGSNGQPLHMVMKLTRAKLESLVGDLIKASIKPCAAALKDAGLSKGDIDEVVLVGGMTRMPKVIDEVTKFFGKEPHKGVNPDEVVAMGAAIQAGVLQGDVKDVVLLDVTPLSMGIETLGGVFTRLIDRNTTIPTKKSQIFSTADDNQSAVTLRVFQGEREMAADNKILGQFNLEGIPPAPRGVPQIEVTFDIDANGIVSVGAKDKGTGKEQQITIQASGGLSDDDIEAMVREAEENAEADKDRKDLVETRNQAESLVHGTEKSLEEHGEKVDPSTVEAIELALGALKETLETDDTAKIKGGIQNVTEAAMRLGEAIYKAEADKAEAAQDGAPEEEERGVDEDIVDADFEDLDDDRKRG</sequence>
<reference key="1">
    <citation type="submission" date="2006-02" db="EMBL/GenBank/DDBJ databases">
        <title>Complete sequence of chromosome of Jannaschia sp. CCS1.</title>
        <authorList>
            <consortium name="US DOE Joint Genome Institute"/>
            <person name="Copeland A."/>
            <person name="Lucas S."/>
            <person name="Lapidus A."/>
            <person name="Barry K."/>
            <person name="Detter J.C."/>
            <person name="Glavina del Rio T."/>
            <person name="Hammon N."/>
            <person name="Israni S."/>
            <person name="Pitluck S."/>
            <person name="Brettin T."/>
            <person name="Bruce D."/>
            <person name="Han C."/>
            <person name="Tapia R."/>
            <person name="Gilna P."/>
            <person name="Chertkov O."/>
            <person name="Saunders E."/>
            <person name="Schmutz J."/>
            <person name="Larimer F."/>
            <person name="Land M."/>
            <person name="Kyrpides N."/>
            <person name="Lykidis A."/>
            <person name="Moran M.A."/>
            <person name="Belas R."/>
            <person name="Ye W."/>
            <person name="Buchan A."/>
            <person name="Gonzalez J.M."/>
            <person name="Schell M.A."/>
            <person name="Richardson P."/>
        </authorList>
    </citation>
    <scope>NUCLEOTIDE SEQUENCE [LARGE SCALE GENOMIC DNA]</scope>
    <source>
        <strain>CCS1</strain>
    </source>
</reference>
<protein>
    <recommendedName>
        <fullName evidence="1">Chaperone protein DnaK</fullName>
    </recommendedName>
    <alternativeName>
        <fullName evidence="1">HSP70</fullName>
    </alternativeName>
    <alternativeName>
        <fullName evidence="1">Heat shock 70 kDa protein</fullName>
    </alternativeName>
    <alternativeName>
        <fullName evidence="1">Heat shock protein 70</fullName>
    </alternativeName>
</protein>
<dbReference type="EMBL" id="CP000264">
    <property type="protein sequence ID" value="ABD53129.1"/>
    <property type="molecule type" value="Genomic_DNA"/>
</dbReference>
<dbReference type="RefSeq" id="WP_011453338.1">
    <property type="nucleotide sequence ID" value="NC_007802.1"/>
</dbReference>
<dbReference type="SMR" id="Q28VY3"/>
<dbReference type="STRING" id="290400.Jann_0212"/>
<dbReference type="KEGG" id="jan:Jann_0212"/>
<dbReference type="eggNOG" id="COG0443">
    <property type="taxonomic scope" value="Bacteria"/>
</dbReference>
<dbReference type="HOGENOM" id="CLU_005965_2_1_5"/>
<dbReference type="OrthoDB" id="9766019at2"/>
<dbReference type="Proteomes" id="UP000008326">
    <property type="component" value="Chromosome"/>
</dbReference>
<dbReference type="GO" id="GO:0005524">
    <property type="term" value="F:ATP binding"/>
    <property type="evidence" value="ECO:0007669"/>
    <property type="project" value="UniProtKB-UniRule"/>
</dbReference>
<dbReference type="GO" id="GO:0140662">
    <property type="term" value="F:ATP-dependent protein folding chaperone"/>
    <property type="evidence" value="ECO:0007669"/>
    <property type="project" value="InterPro"/>
</dbReference>
<dbReference type="GO" id="GO:0051082">
    <property type="term" value="F:unfolded protein binding"/>
    <property type="evidence" value="ECO:0007669"/>
    <property type="project" value="InterPro"/>
</dbReference>
<dbReference type="FunFam" id="2.60.34.10:FF:000014">
    <property type="entry name" value="Chaperone protein DnaK HSP70"/>
    <property type="match status" value="1"/>
</dbReference>
<dbReference type="FunFam" id="3.30.30.30:FF:000003">
    <property type="entry name" value="Heat shock protein 9"/>
    <property type="match status" value="1"/>
</dbReference>
<dbReference type="FunFam" id="1.20.1270.10:FF:000001">
    <property type="entry name" value="Molecular chaperone DnaK"/>
    <property type="match status" value="1"/>
</dbReference>
<dbReference type="FunFam" id="3.30.420.40:FF:000004">
    <property type="entry name" value="Molecular chaperone DnaK"/>
    <property type="match status" value="1"/>
</dbReference>
<dbReference type="FunFam" id="3.90.640.10:FF:000003">
    <property type="entry name" value="Molecular chaperone DnaK"/>
    <property type="match status" value="1"/>
</dbReference>
<dbReference type="Gene3D" id="1.20.1270.10">
    <property type="match status" value="1"/>
</dbReference>
<dbReference type="Gene3D" id="3.30.420.40">
    <property type="match status" value="2"/>
</dbReference>
<dbReference type="Gene3D" id="3.90.640.10">
    <property type="entry name" value="Actin, Chain A, domain 4"/>
    <property type="match status" value="1"/>
</dbReference>
<dbReference type="Gene3D" id="2.60.34.10">
    <property type="entry name" value="Substrate Binding Domain Of DNAk, Chain A, domain 1"/>
    <property type="match status" value="1"/>
</dbReference>
<dbReference type="HAMAP" id="MF_00332">
    <property type="entry name" value="DnaK"/>
    <property type="match status" value="1"/>
</dbReference>
<dbReference type="InterPro" id="IPR043129">
    <property type="entry name" value="ATPase_NBD"/>
</dbReference>
<dbReference type="InterPro" id="IPR012725">
    <property type="entry name" value="Chaperone_DnaK"/>
</dbReference>
<dbReference type="InterPro" id="IPR018181">
    <property type="entry name" value="Heat_shock_70_CS"/>
</dbReference>
<dbReference type="InterPro" id="IPR029048">
    <property type="entry name" value="HSP70_C_sf"/>
</dbReference>
<dbReference type="InterPro" id="IPR029047">
    <property type="entry name" value="HSP70_peptide-bd_sf"/>
</dbReference>
<dbReference type="InterPro" id="IPR013126">
    <property type="entry name" value="Hsp_70_fam"/>
</dbReference>
<dbReference type="NCBIfam" id="NF001413">
    <property type="entry name" value="PRK00290.1"/>
    <property type="match status" value="1"/>
</dbReference>
<dbReference type="NCBIfam" id="NF003520">
    <property type="entry name" value="PRK05183.1"/>
    <property type="match status" value="1"/>
</dbReference>
<dbReference type="NCBIfam" id="TIGR02350">
    <property type="entry name" value="prok_dnaK"/>
    <property type="match status" value="1"/>
</dbReference>
<dbReference type="PANTHER" id="PTHR19375">
    <property type="entry name" value="HEAT SHOCK PROTEIN 70KDA"/>
    <property type="match status" value="1"/>
</dbReference>
<dbReference type="Pfam" id="PF00012">
    <property type="entry name" value="HSP70"/>
    <property type="match status" value="1"/>
</dbReference>
<dbReference type="PRINTS" id="PR00301">
    <property type="entry name" value="HEATSHOCK70"/>
</dbReference>
<dbReference type="SUPFAM" id="SSF53067">
    <property type="entry name" value="Actin-like ATPase domain"/>
    <property type="match status" value="2"/>
</dbReference>
<dbReference type="SUPFAM" id="SSF100934">
    <property type="entry name" value="Heat shock protein 70kD (HSP70), C-terminal subdomain"/>
    <property type="match status" value="1"/>
</dbReference>
<dbReference type="SUPFAM" id="SSF100920">
    <property type="entry name" value="Heat shock protein 70kD (HSP70), peptide-binding domain"/>
    <property type="match status" value="1"/>
</dbReference>
<dbReference type="PROSITE" id="PS00297">
    <property type="entry name" value="HSP70_1"/>
    <property type="match status" value="1"/>
</dbReference>
<dbReference type="PROSITE" id="PS00329">
    <property type="entry name" value="HSP70_2"/>
    <property type="match status" value="1"/>
</dbReference>
<dbReference type="PROSITE" id="PS01036">
    <property type="entry name" value="HSP70_3"/>
    <property type="match status" value="1"/>
</dbReference>
<organism>
    <name type="scientific">Jannaschia sp. (strain CCS1)</name>
    <dbReference type="NCBI Taxonomy" id="290400"/>
    <lineage>
        <taxon>Bacteria</taxon>
        <taxon>Pseudomonadati</taxon>
        <taxon>Pseudomonadota</taxon>
        <taxon>Alphaproteobacteria</taxon>
        <taxon>Rhodobacterales</taxon>
        <taxon>Roseobacteraceae</taxon>
        <taxon>Jannaschia</taxon>
    </lineage>
</organism>
<name>DNAK_JANSC</name>
<keyword id="KW-0067">ATP-binding</keyword>
<keyword id="KW-0143">Chaperone</keyword>
<keyword id="KW-0547">Nucleotide-binding</keyword>
<keyword id="KW-0597">Phosphoprotein</keyword>
<keyword id="KW-1185">Reference proteome</keyword>
<keyword id="KW-0346">Stress response</keyword>
<comment type="function">
    <text evidence="1">Acts as a chaperone.</text>
</comment>
<comment type="induction">
    <text evidence="1">By stress conditions e.g. heat shock.</text>
</comment>
<comment type="similarity">
    <text evidence="1">Belongs to the heat shock protein 70 family.</text>
</comment>
<proteinExistence type="inferred from homology"/>
<evidence type="ECO:0000255" key="1">
    <source>
        <dbReference type="HAMAP-Rule" id="MF_00332"/>
    </source>
</evidence>
<evidence type="ECO:0000256" key="2">
    <source>
        <dbReference type="SAM" id="MobiDB-lite"/>
    </source>
</evidence>
<accession>Q28VY3</accession>
<gene>
    <name evidence="1" type="primary">dnaK</name>
    <name type="ordered locus">Jann_0212</name>
</gene>